<reference key="1">
    <citation type="journal article" date="1984" name="J. Biochem.">
        <title>Molecular cloning and nucleotide sequence of cDNA coding for rat brain cholecystokinin precursor.</title>
        <authorList>
            <person name="Kuwano R."/>
            <person name="Araki K."/>
            <person name="Usui H."/>
            <person name="Fukui T."/>
            <person name="Ohtsuka E."/>
            <person name="Ikehara M."/>
            <person name="Takahashi Y."/>
        </authorList>
    </citation>
    <scope>NUCLEOTIDE SEQUENCE [MRNA]</scope>
</reference>
<reference key="2">
    <citation type="journal article" date="1984" name="Proc. Natl. Acad. Sci. U.S.A.">
        <title>Cloning and sequence analysis of a cDNA encoding rat preprocholecystokinin.</title>
        <authorList>
            <person name="Deschenes R.J."/>
            <person name="Lorenz L.J."/>
            <person name="Haun R.S."/>
            <person name="Roos B.A."/>
            <person name="Collier K.J."/>
            <person name="Dixon J.E."/>
        </authorList>
    </citation>
    <scope>NUCLEOTIDE SEQUENCE [GENOMIC DNA]</scope>
    <scope>TISSUE SPECIFICITY</scope>
</reference>
<reference key="3">
    <citation type="journal article" date="1985" name="Ann. N. Y. Acad. Sci.">
        <title>Modulation of cholecystokinin gene expression.</title>
        <authorList>
            <person name="Deschenes R.J."/>
            <person name="Haun R.S."/>
            <person name="Sunkel D."/>
            <person name="Roos B.A."/>
            <person name="Dixon J.E."/>
        </authorList>
    </citation>
    <scope>NUCLEOTIDE SEQUENCE [MRNA]</scope>
</reference>
<reference key="4">
    <citation type="journal article" date="1985" name="J. Biol. Chem.">
        <title>A gene encoding rat cholecystokinin. Isolation, nucleotide sequence, and promoter activity.</title>
        <authorList>
            <person name="Deschenes R.J."/>
            <person name="Haun R.S."/>
            <person name="Funckes C.L."/>
            <person name="Dixon J.E."/>
        </authorList>
    </citation>
    <scope>NUCLEOTIDE SEQUENCE [GENOMIC DNA]</scope>
</reference>
<reference key="5">
    <citation type="journal article" date="1986" name="Regul. Pept.">
        <title>Isolation, structure and properties of the C-terminal fragment of the rat cholecystokinin precursor.</title>
        <authorList>
            <person name="Varro A."/>
            <person name="Young J."/>
            <person name="Gregory H."/>
            <person name="Csech J."/>
            <person name="Dockray G.J."/>
        </authorList>
    </citation>
    <scope>SULFATION AT TYR-111 AND TYR-113</scope>
</reference>
<reference key="6">
    <citation type="journal article" date="1994" name="Neuropeptides">
        <title>Inhibition of pro-cholecystokinin (CCK) sulfation by treatment with sodium chlorate alters its processing and decreases cellular content and secretion of CCK 8.</title>
        <authorList>
            <person name="Beinfeld M.C."/>
        </authorList>
    </citation>
    <scope>SULFATION AT TYR-97</scope>
</reference>
<reference key="7">
    <citation type="journal article" date="2003" name="Life Sci.">
        <title>Biosynthesis and processing of pro CCK: recent progress and future challenges.</title>
        <authorList>
            <person name="Beinfeld M.C."/>
        </authorList>
    </citation>
    <scope>REVIEW</scope>
</reference>
<feature type="signal peptide" evidence="4">
    <location>
        <begin position="1"/>
        <end position="20"/>
    </location>
</feature>
<feature type="propeptide" id="PRO_0000010565">
    <location>
        <begin position="21"/>
        <end position="45"/>
    </location>
</feature>
<feature type="chain" id="PRO_0000010566" description="Cholecystokinin">
    <location>
        <begin position="46"/>
        <end position="103"/>
    </location>
</feature>
<feature type="propeptide" id="PRO_0000010567">
    <location>
        <begin position="47"/>
        <end position="63"/>
    </location>
</feature>
<feature type="peptide" id="PRO_0000010568" description="Cholecystokinin-39">
    <location>
        <begin position="65"/>
        <end position="103"/>
    </location>
</feature>
<feature type="peptide" id="PRO_0000010569" description="Cholecystokinin-33">
    <location>
        <begin position="71"/>
        <end position="103"/>
    </location>
</feature>
<feature type="peptide" id="PRO_0000010570" description="Cholecystokinin-22">
    <location>
        <begin position="82"/>
        <end position="103"/>
    </location>
</feature>
<feature type="peptide" id="PRO_0000010571" description="Cholecystokinin-12">
    <location>
        <begin position="92"/>
        <end position="103"/>
    </location>
</feature>
<feature type="peptide" id="PRO_0000010572" description="Cholecystokinin-8">
    <location>
        <begin position="96"/>
        <end position="103"/>
    </location>
</feature>
<feature type="propeptide" id="PRO_0000010573">
    <location>
        <begin position="107"/>
        <end position="115"/>
    </location>
</feature>
<feature type="site" description="Cleavage">
    <location>
        <begin position="106"/>
        <end position="107"/>
    </location>
</feature>
<feature type="modified residue" description="Sulfotyrosine" evidence="6">
    <location>
        <position position="97"/>
    </location>
</feature>
<feature type="modified residue" description="Phenylalanine amide" evidence="1">
    <location>
        <position position="103"/>
    </location>
</feature>
<feature type="modified residue" description="Sulfotyrosine" evidence="7">
    <location>
        <position position="111"/>
    </location>
</feature>
<feature type="modified residue" description="Sulfotyrosine" evidence="7">
    <location>
        <position position="113"/>
    </location>
</feature>
<protein>
    <recommendedName>
        <fullName>Cholecystokinin</fullName>
        <shortName>CCK</shortName>
    </recommendedName>
    <component>
        <recommendedName>
            <fullName>Cholecystokinin-39</fullName>
            <shortName>CCK39</shortName>
        </recommendedName>
    </component>
    <component>
        <recommendedName>
            <fullName>Cholecystokinin-33</fullName>
            <shortName>CCK33</shortName>
        </recommendedName>
    </component>
    <component>
        <recommendedName>
            <fullName>Cholecystokinin-22</fullName>
            <shortName>CCK22</shortName>
        </recommendedName>
    </component>
    <component>
        <recommendedName>
            <fullName>Cholecystokinin-12</fullName>
            <shortName>CCK12</shortName>
        </recommendedName>
    </component>
    <component>
        <recommendedName>
            <fullName>Cholecystokinin-8</fullName>
            <shortName>CCK8</shortName>
        </recommendedName>
    </component>
</protein>
<gene>
    <name type="primary">Cck</name>
</gene>
<sequence>MKCGVCLCVVMAVLAAGALAQPVVPVEAVDPMEQRAEEAPRRQLRAVLRPDSEPRARLGALLARYIQQVRKAPSGRMSVLKNLQGLDPSHRISDRDYMGWMDFGRRSAEDYEYPS</sequence>
<accession>P01355</accession>
<organism>
    <name type="scientific">Rattus norvegicus</name>
    <name type="common">Rat</name>
    <dbReference type="NCBI Taxonomy" id="10116"/>
    <lineage>
        <taxon>Eukaryota</taxon>
        <taxon>Metazoa</taxon>
        <taxon>Chordata</taxon>
        <taxon>Craniata</taxon>
        <taxon>Vertebrata</taxon>
        <taxon>Euteleostomi</taxon>
        <taxon>Mammalia</taxon>
        <taxon>Eutheria</taxon>
        <taxon>Euarchontoglires</taxon>
        <taxon>Glires</taxon>
        <taxon>Rodentia</taxon>
        <taxon>Myomorpha</taxon>
        <taxon>Muroidea</taxon>
        <taxon>Muridae</taxon>
        <taxon>Murinae</taxon>
        <taxon>Rattus</taxon>
    </lineage>
</organism>
<comment type="function">
    <text evidence="8">This peptide hormone induces gall bladder contraction and the release of pancreatic enzymes in the gut. Its function in the brain is not clear. Binding to CCK-A receptors stimulates amylase release from the pancreas, binding to CCK-B receptors stimulates gastric acid secretion.</text>
</comment>
<comment type="subunit">
    <text evidence="3">Binds to CCK-A receptors in the pancreas and CCK-B receptors in the brain.</text>
</comment>
<comment type="subcellular location">
    <subcellularLocation>
        <location evidence="2">Secreted</location>
    </subcellularLocation>
</comment>
<comment type="tissue specificity">
    <text evidence="5">The shortest form (CCK8) is predominantly found in the brain, whereas the larger ones are found in the intestine.</text>
</comment>
<comment type="PTM">
    <text>The precursor is cleaved by proteases to produce a number of active cholecystokinins.</text>
</comment>
<comment type="PTM">
    <text evidence="6 7">Sulfation of Tyr-97 is essential for receptor activation.</text>
</comment>
<comment type="similarity">
    <text evidence="9">Belongs to the gastrin/cholecystokinin family.</text>
</comment>
<keyword id="KW-0027">Amidation</keyword>
<keyword id="KW-0165">Cleavage on pair of basic residues</keyword>
<keyword id="KW-0372">Hormone</keyword>
<keyword id="KW-1185">Reference proteome</keyword>
<keyword id="KW-0964">Secreted</keyword>
<keyword id="KW-0732">Signal</keyword>
<keyword id="KW-0765">Sulfation</keyword>
<proteinExistence type="evidence at protein level"/>
<name>CCKN_RAT</name>
<evidence type="ECO:0000250" key="1">
    <source>
        <dbReference type="UniProtKB" id="P06307"/>
    </source>
</evidence>
<evidence type="ECO:0000250" key="2">
    <source>
        <dbReference type="UniProtKB" id="P09240"/>
    </source>
</evidence>
<evidence type="ECO:0000250" key="3">
    <source>
        <dbReference type="UniProtKB" id="Q9TS44"/>
    </source>
</evidence>
<evidence type="ECO:0000255" key="4"/>
<evidence type="ECO:0000269" key="5">
    <source>
    </source>
</evidence>
<evidence type="ECO:0000269" key="6">
    <source>
    </source>
</evidence>
<evidence type="ECO:0000269" key="7">
    <source ref="5"/>
</evidence>
<evidence type="ECO:0000303" key="8">
    <source>
    </source>
</evidence>
<evidence type="ECO:0000305" key="9"/>
<dbReference type="EMBL" id="X01032">
    <property type="protein sequence ID" value="CAA25517.1"/>
    <property type="molecule type" value="mRNA"/>
</dbReference>
<dbReference type="EMBL" id="K01259">
    <property type="protein sequence ID" value="AAA40897.1"/>
    <property type="molecule type" value="Genomic_DNA"/>
</dbReference>
<dbReference type="EMBL" id="M25942">
    <property type="protein sequence ID" value="AAA40898.1"/>
    <property type="molecule type" value="mRNA"/>
</dbReference>
<dbReference type="EMBL" id="M10353">
    <property type="protein sequence ID" value="AAB61086.1"/>
    <property type="molecule type" value="Genomic_DNA"/>
</dbReference>
<dbReference type="EMBL" id="M10352">
    <property type="protein sequence ID" value="AAB61086.1"/>
    <property type="status" value="JOINED"/>
    <property type="molecule type" value="Genomic_DNA"/>
</dbReference>
<dbReference type="PIR" id="A01624">
    <property type="entry name" value="GMRTCP"/>
</dbReference>
<dbReference type="RefSeq" id="NP_036961.1">
    <property type="nucleotide sequence ID" value="NM_012829.2"/>
</dbReference>
<dbReference type="FunCoup" id="P01355">
    <property type="interactions" value="217"/>
</dbReference>
<dbReference type="STRING" id="10116.ENSRNOP00000026159"/>
<dbReference type="BindingDB" id="P01355"/>
<dbReference type="ChEMBL" id="CHEMBL5465544"/>
<dbReference type="PhosphoSitePlus" id="P01355"/>
<dbReference type="PaxDb" id="10116-ENSRNOP00000026159"/>
<dbReference type="Ensembl" id="ENSRNOT00000026159.4">
    <property type="protein sequence ID" value="ENSRNOP00000026159.1"/>
    <property type="gene ID" value="ENSRNOG00000019321.8"/>
</dbReference>
<dbReference type="GeneID" id="25298"/>
<dbReference type="KEGG" id="rno:25298"/>
<dbReference type="UCSC" id="RGD:2288">
    <property type="organism name" value="rat"/>
</dbReference>
<dbReference type="AGR" id="RGD:2288"/>
<dbReference type="CTD" id="885"/>
<dbReference type="RGD" id="2288">
    <property type="gene designation" value="Cck"/>
</dbReference>
<dbReference type="eggNOG" id="ENOG502S472">
    <property type="taxonomic scope" value="Eukaryota"/>
</dbReference>
<dbReference type="GeneTree" id="ENSGT00390000003571"/>
<dbReference type="HOGENOM" id="CLU_169783_0_0_1"/>
<dbReference type="InParanoid" id="P01355"/>
<dbReference type="OMA" id="GSHNENP"/>
<dbReference type="PhylomeDB" id="P01355"/>
<dbReference type="TreeFam" id="TF333419"/>
<dbReference type="Reactome" id="R-RNO-375276">
    <property type="pathway name" value="Peptide ligand-binding receptors"/>
</dbReference>
<dbReference type="Reactome" id="R-RNO-416476">
    <property type="pathway name" value="G alpha (q) signalling events"/>
</dbReference>
<dbReference type="PRO" id="PR:P01355"/>
<dbReference type="Proteomes" id="UP000002494">
    <property type="component" value="Chromosome 8"/>
</dbReference>
<dbReference type="Bgee" id="ENSRNOG00000019321">
    <property type="expression patterns" value="Expressed in frontal cortex and 17 other cell types or tissues"/>
</dbReference>
<dbReference type="GO" id="GO:0030424">
    <property type="term" value="C:axon"/>
    <property type="evidence" value="ECO:0000250"/>
    <property type="project" value="UniProtKB"/>
</dbReference>
<dbReference type="GO" id="GO:0043203">
    <property type="term" value="C:axon hillock"/>
    <property type="evidence" value="ECO:0000314"/>
    <property type="project" value="RGD"/>
</dbReference>
<dbReference type="GO" id="GO:0043194">
    <property type="term" value="C:axon initial segment"/>
    <property type="evidence" value="ECO:0000314"/>
    <property type="project" value="RGD"/>
</dbReference>
<dbReference type="GO" id="GO:0030425">
    <property type="term" value="C:dendrite"/>
    <property type="evidence" value="ECO:0000314"/>
    <property type="project" value="RGD"/>
</dbReference>
<dbReference type="GO" id="GO:0005615">
    <property type="term" value="C:extracellular space"/>
    <property type="evidence" value="ECO:0000314"/>
    <property type="project" value="RGD"/>
</dbReference>
<dbReference type="GO" id="GO:0098982">
    <property type="term" value="C:GABA-ergic synapse"/>
    <property type="evidence" value="ECO:0000314"/>
    <property type="project" value="SynGO"/>
</dbReference>
<dbReference type="GO" id="GO:0005739">
    <property type="term" value="C:mitochondrion"/>
    <property type="evidence" value="ECO:0007669"/>
    <property type="project" value="GOC"/>
</dbReference>
<dbReference type="GO" id="GO:0043025">
    <property type="term" value="C:neuronal cell body"/>
    <property type="evidence" value="ECO:0000314"/>
    <property type="project" value="RGD"/>
</dbReference>
<dbReference type="GO" id="GO:0099013">
    <property type="term" value="C:neuronal dense core vesicle lumen"/>
    <property type="evidence" value="ECO:0000314"/>
    <property type="project" value="SynGO"/>
</dbReference>
<dbReference type="GO" id="GO:0043204">
    <property type="term" value="C:perikaryon"/>
    <property type="evidence" value="ECO:0000314"/>
    <property type="project" value="RGD"/>
</dbReference>
<dbReference type="GO" id="GO:0043195">
    <property type="term" value="C:terminal bouton"/>
    <property type="evidence" value="ECO:0000314"/>
    <property type="project" value="RGD"/>
</dbReference>
<dbReference type="GO" id="GO:0005179">
    <property type="term" value="F:hormone activity"/>
    <property type="evidence" value="ECO:0000314"/>
    <property type="project" value="RGD"/>
</dbReference>
<dbReference type="GO" id="GO:0005184">
    <property type="term" value="F:neuropeptide hormone activity"/>
    <property type="evidence" value="ECO:0000314"/>
    <property type="project" value="RGD"/>
</dbReference>
<dbReference type="GO" id="GO:0051428">
    <property type="term" value="F:peptide hormone receptor binding"/>
    <property type="evidence" value="ECO:0000266"/>
    <property type="project" value="RGD"/>
</dbReference>
<dbReference type="GO" id="GO:0048018">
    <property type="term" value="F:receptor ligand activity"/>
    <property type="evidence" value="ECO:0000266"/>
    <property type="project" value="RGD"/>
</dbReference>
<dbReference type="GO" id="GO:0006309">
    <property type="term" value="P:apoptotic DNA fragmentation"/>
    <property type="evidence" value="ECO:0000314"/>
    <property type="project" value="RGD"/>
</dbReference>
<dbReference type="GO" id="GO:0007409">
    <property type="term" value="P:axonogenesis"/>
    <property type="evidence" value="ECO:0000250"/>
    <property type="project" value="UniProtKB"/>
</dbReference>
<dbReference type="GO" id="GO:0038188">
    <property type="term" value="P:cholecystokinin signaling pathway"/>
    <property type="evidence" value="ECO:0000266"/>
    <property type="project" value="RGD"/>
</dbReference>
<dbReference type="GO" id="GO:0007586">
    <property type="term" value="P:digestion"/>
    <property type="evidence" value="ECO:0000318"/>
    <property type="project" value="GO_Central"/>
</dbReference>
<dbReference type="GO" id="GO:0042755">
    <property type="term" value="P:eating behavior"/>
    <property type="evidence" value="ECO:0000314"/>
    <property type="project" value="RGD"/>
</dbReference>
<dbReference type="GO" id="GO:0007613">
    <property type="term" value="P:memory"/>
    <property type="evidence" value="ECO:0000315"/>
    <property type="project" value="RGD"/>
</dbReference>
<dbReference type="GO" id="GO:0051882">
    <property type="term" value="P:mitochondrial depolarization"/>
    <property type="evidence" value="ECO:0000314"/>
    <property type="project" value="RGD"/>
</dbReference>
<dbReference type="GO" id="GO:0032099">
    <property type="term" value="P:negative regulation of appetite"/>
    <property type="evidence" value="ECO:0000314"/>
    <property type="project" value="RGD"/>
</dbReference>
<dbReference type="GO" id="GO:2000986">
    <property type="term" value="P:negative regulation of behavioral fear response"/>
    <property type="evidence" value="ECO:0000315"/>
    <property type="project" value="RGD"/>
</dbReference>
<dbReference type="GO" id="GO:1903999">
    <property type="term" value="P:negative regulation of eating behavior"/>
    <property type="evidence" value="ECO:0000314"/>
    <property type="project" value="RGD"/>
</dbReference>
<dbReference type="GO" id="GO:0001764">
    <property type="term" value="P:neuron migration"/>
    <property type="evidence" value="ECO:0000250"/>
    <property type="project" value="UniProtKB"/>
</dbReference>
<dbReference type="GO" id="GO:0007200">
    <property type="term" value="P:phospholipase C-activating G protein-coupled receptor signaling pathway"/>
    <property type="evidence" value="ECO:0000314"/>
    <property type="project" value="RGD"/>
</dbReference>
<dbReference type="GO" id="GO:2000987">
    <property type="term" value="P:positive regulation of behavioral fear response"/>
    <property type="evidence" value="ECO:0000314"/>
    <property type="project" value="RGD"/>
</dbReference>
<dbReference type="GO" id="GO:0008284">
    <property type="term" value="P:positive regulation of cell population proliferation"/>
    <property type="evidence" value="ECO:0000314"/>
    <property type="project" value="RGD"/>
</dbReference>
<dbReference type="GO" id="GO:0014049">
    <property type="term" value="P:positive regulation of glutamate secretion"/>
    <property type="evidence" value="ECO:0000314"/>
    <property type="project" value="CACAO"/>
</dbReference>
<dbReference type="GO" id="GO:1902279">
    <property type="term" value="P:positive regulation of pancreatic amylase secretion by cholecystokinin signaling pathway"/>
    <property type="evidence" value="ECO:0000314"/>
    <property type="project" value="RGD"/>
</dbReference>
<dbReference type="GO" id="GO:0031334">
    <property type="term" value="P:positive regulation of protein-containing complex assembly"/>
    <property type="evidence" value="ECO:0000314"/>
    <property type="project" value="RGD"/>
</dbReference>
<dbReference type="GO" id="GO:0001836">
    <property type="term" value="P:release of cytochrome c from mitochondria"/>
    <property type="evidence" value="ECO:0000314"/>
    <property type="project" value="RGD"/>
</dbReference>
<dbReference type="GO" id="GO:0099538">
    <property type="term" value="P:synaptic signaling via neuropeptide"/>
    <property type="evidence" value="ECO:0000314"/>
    <property type="project" value="SynGO"/>
</dbReference>
<dbReference type="GO" id="GO:0008542">
    <property type="term" value="P:visual learning"/>
    <property type="evidence" value="ECO:0000315"/>
    <property type="project" value="RGD"/>
</dbReference>
<dbReference type="InterPro" id="IPR015499">
    <property type="entry name" value="CCK-like"/>
</dbReference>
<dbReference type="InterPro" id="IPR001651">
    <property type="entry name" value="Gastrin/CCK"/>
</dbReference>
<dbReference type="InterPro" id="IPR013152">
    <property type="entry name" value="Gastrin/cholecystokinin_CS"/>
</dbReference>
<dbReference type="PANTHER" id="PTHR10786">
    <property type="entry name" value="CHOLECYSTOKININ"/>
    <property type="match status" value="1"/>
</dbReference>
<dbReference type="PANTHER" id="PTHR10786:SF0">
    <property type="entry name" value="CHOLECYSTOKININ"/>
    <property type="match status" value="1"/>
</dbReference>
<dbReference type="Pfam" id="PF00918">
    <property type="entry name" value="Gastrin"/>
    <property type="match status" value="1"/>
</dbReference>
<dbReference type="SMART" id="SM00029">
    <property type="entry name" value="GASTRIN"/>
    <property type="match status" value="1"/>
</dbReference>
<dbReference type="PROSITE" id="PS00259">
    <property type="entry name" value="GASTRIN"/>
    <property type="match status" value="1"/>
</dbReference>